<sequence>MRQALPLVTRQGDRIAIVSGLRTPFARQATAFHGIPAVDLGKMVVGELLARSEIPADAIEQLVFGQVVQMPEAPNIAREIVLGTGMNVHTDAYSVSRACATSFQAVANVAESLMAGTIRAGIAGGADSSSVLPIGVSKALARVLVDVNKARTTRQRLTLFSRLRLRDLLPVPPAVAEYSTGLRMGDTAEQMAKTYGITREQQDALAHRSHQRAAQAWAEGKLAEEVMTTYVPPYKNPFAEDNNIRGASTLADYAKLRPAFDRKHGSVTAANSTPLTDGAAAVILMTESRAKELGLHPLGYLRSYAFTAIDVWQDMLLGPAWSTPLALERAGLTMADLTLFDMHEAFAAQTLANLQLLGSERFAREVLGRAQATGEVDDAKFNVLGGSIAYGHPFAATGARMITQTLHELRRRGGGFGLVTACAAGGLGAAMVLEAE</sequence>
<protein>
    <recommendedName>
        <fullName evidence="1">3-ketoacyl-CoA thiolase</fullName>
        <ecNumber evidence="1">2.3.1.16</ecNumber>
    </recommendedName>
    <alternativeName>
        <fullName evidence="1">ACSs</fullName>
    </alternativeName>
    <alternativeName>
        <fullName evidence="1">Acetyl-CoA acyltransferase</fullName>
    </alternativeName>
    <alternativeName>
        <fullName evidence="1">Acyl-CoA ligase</fullName>
    </alternativeName>
    <alternativeName>
        <fullName evidence="1">Beta-ketothiolase</fullName>
    </alternativeName>
    <alternativeName>
        <fullName evidence="1">Fatty acid oxidation complex subunit beta</fullName>
    </alternativeName>
</protein>
<reference key="1">
    <citation type="journal article" date="2004" name="Nat. Genet.">
        <title>Comparison of genome degradation in Paratyphi A and Typhi, human-restricted serovars of Salmonella enterica that cause typhoid.</title>
        <authorList>
            <person name="McClelland M."/>
            <person name="Sanderson K.E."/>
            <person name="Clifton S.W."/>
            <person name="Latreille P."/>
            <person name="Porwollik S."/>
            <person name="Sabo A."/>
            <person name="Meyer R."/>
            <person name="Bieri T."/>
            <person name="Ozersky P."/>
            <person name="McLellan M."/>
            <person name="Harkins C.R."/>
            <person name="Wang C."/>
            <person name="Nguyen C."/>
            <person name="Berghoff A."/>
            <person name="Elliott G."/>
            <person name="Kohlberg S."/>
            <person name="Strong C."/>
            <person name="Du F."/>
            <person name="Carter J."/>
            <person name="Kremizki C."/>
            <person name="Layman D."/>
            <person name="Leonard S."/>
            <person name="Sun H."/>
            <person name="Fulton L."/>
            <person name="Nash W."/>
            <person name="Miner T."/>
            <person name="Minx P."/>
            <person name="Delehaunty K."/>
            <person name="Fronick C."/>
            <person name="Magrini V."/>
            <person name="Nhan M."/>
            <person name="Warren W."/>
            <person name="Florea L."/>
            <person name="Spieth J."/>
            <person name="Wilson R.K."/>
        </authorList>
    </citation>
    <scope>NUCLEOTIDE SEQUENCE [LARGE SCALE GENOMIC DNA]</scope>
    <source>
        <strain>ATCC 9150 / SARB42</strain>
    </source>
</reference>
<evidence type="ECO:0000255" key="1">
    <source>
        <dbReference type="HAMAP-Rule" id="MF_01618"/>
    </source>
</evidence>
<keyword id="KW-0012">Acyltransferase</keyword>
<keyword id="KW-0963">Cytoplasm</keyword>
<keyword id="KW-0276">Fatty acid metabolism</keyword>
<keyword id="KW-0442">Lipid degradation</keyword>
<keyword id="KW-0443">Lipid metabolism</keyword>
<keyword id="KW-0808">Transferase</keyword>
<dbReference type="EC" id="2.3.1.16" evidence="1"/>
<dbReference type="EMBL" id="CP000026">
    <property type="protein sequence ID" value="AAV76477.1"/>
    <property type="molecule type" value="Genomic_DNA"/>
</dbReference>
<dbReference type="RefSeq" id="WP_001248121.1">
    <property type="nucleotide sequence ID" value="NC_006511.1"/>
</dbReference>
<dbReference type="SMR" id="Q5PCX7"/>
<dbReference type="KEGG" id="spt:SPA0475"/>
<dbReference type="HOGENOM" id="CLU_031026_2_0_6"/>
<dbReference type="UniPathway" id="UPA00659"/>
<dbReference type="Proteomes" id="UP000008185">
    <property type="component" value="Chromosome"/>
</dbReference>
<dbReference type="GO" id="GO:0005829">
    <property type="term" value="C:cytosol"/>
    <property type="evidence" value="ECO:0007669"/>
    <property type="project" value="TreeGrafter"/>
</dbReference>
<dbReference type="GO" id="GO:0003988">
    <property type="term" value="F:acetyl-CoA C-acyltransferase activity"/>
    <property type="evidence" value="ECO:0007669"/>
    <property type="project" value="UniProtKB-UniRule"/>
</dbReference>
<dbReference type="GO" id="GO:0006635">
    <property type="term" value="P:fatty acid beta-oxidation"/>
    <property type="evidence" value="ECO:0007669"/>
    <property type="project" value="UniProtKB-UniRule"/>
</dbReference>
<dbReference type="CDD" id="cd00751">
    <property type="entry name" value="thiolase"/>
    <property type="match status" value="1"/>
</dbReference>
<dbReference type="FunFam" id="3.40.47.10:FF:000011">
    <property type="entry name" value="3-ketoacyl-CoA thiolase"/>
    <property type="match status" value="1"/>
</dbReference>
<dbReference type="Gene3D" id="3.40.47.10">
    <property type="match status" value="1"/>
</dbReference>
<dbReference type="HAMAP" id="MF_01618">
    <property type="entry name" value="FadI"/>
    <property type="match status" value="1"/>
</dbReference>
<dbReference type="InterPro" id="IPR012806">
    <property type="entry name" value="Ac-CoA_C-AcTrfase_FadI"/>
</dbReference>
<dbReference type="InterPro" id="IPR002155">
    <property type="entry name" value="Thiolase"/>
</dbReference>
<dbReference type="InterPro" id="IPR016039">
    <property type="entry name" value="Thiolase-like"/>
</dbReference>
<dbReference type="InterPro" id="IPR020615">
    <property type="entry name" value="Thiolase_acyl_enz_int_AS"/>
</dbReference>
<dbReference type="InterPro" id="IPR020610">
    <property type="entry name" value="Thiolase_AS"/>
</dbReference>
<dbReference type="InterPro" id="IPR020617">
    <property type="entry name" value="Thiolase_C"/>
</dbReference>
<dbReference type="InterPro" id="IPR020613">
    <property type="entry name" value="Thiolase_CS"/>
</dbReference>
<dbReference type="InterPro" id="IPR020616">
    <property type="entry name" value="Thiolase_N"/>
</dbReference>
<dbReference type="NCBIfam" id="TIGR01930">
    <property type="entry name" value="AcCoA-C-Actrans"/>
    <property type="match status" value="1"/>
</dbReference>
<dbReference type="NCBIfam" id="TIGR02446">
    <property type="entry name" value="FadI"/>
    <property type="match status" value="1"/>
</dbReference>
<dbReference type="NCBIfam" id="NF006516">
    <property type="entry name" value="PRK08963.1"/>
    <property type="match status" value="1"/>
</dbReference>
<dbReference type="PANTHER" id="PTHR18919:SF107">
    <property type="entry name" value="ACETYL-COA ACETYLTRANSFERASE, CYTOSOLIC"/>
    <property type="match status" value="1"/>
</dbReference>
<dbReference type="PANTHER" id="PTHR18919">
    <property type="entry name" value="ACETYL-COA C-ACYLTRANSFERASE"/>
    <property type="match status" value="1"/>
</dbReference>
<dbReference type="Pfam" id="PF02803">
    <property type="entry name" value="Thiolase_C"/>
    <property type="match status" value="1"/>
</dbReference>
<dbReference type="Pfam" id="PF00108">
    <property type="entry name" value="Thiolase_N"/>
    <property type="match status" value="1"/>
</dbReference>
<dbReference type="PIRSF" id="PIRSF000429">
    <property type="entry name" value="Ac-CoA_Ac_transf"/>
    <property type="match status" value="1"/>
</dbReference>
<dbReference type="SUPFAM" id="SSF53901">
    <property type="entry name" value="Thiolase-like"/>
    <property type="match status" value="2"/>
</dbReference>
<dbReference type="PROSITE" id="PS00098">
    <property type="entry name" value="THIOLASE_1"/>
    <property type="match status" value="1"/>
</dbReference>
<dbReference type="PROSITE" id="PS00737">
    <property type="entry name" value="THIOLASE_2"/>
    <property type="match status" value="1"/>
</dbReference>
<dbReference type="PROSITE" id="PS00099">
    <property type="entry name" value="THIOLASE_3"/>
    <property type="match status" value="1"/>
</dbReference>
<proteinExistence type="inferred from homology"/>
<name>FADI_SALPA</name>
<feature type="chain" id="PRO_0000206444" description="3-ketoacyl-CoA thiolase">
    <location>
        <begin position="1"/>
        <end position="436"/>
    </location>
</feature>
<feature type="active site" description="Acyl-thioester intermediate" evidence="1">
    <location>
        <position position="99"/>
    </location>
</feature>
<feature type="active site" description="Proton acceptor" evidence="1">
    <location>
        <position position="392"/>
    </location>
</feature>
<feature type="active site" description="Proton acceptor" evidence="1">
    <location>
        <position position="422"/>
    </location>
</feature>
<gene>
    <name evidence="1" type="primary">fadI</name>
    <name type="ordered locus">SPA0475</name>
</gene>
<organism>
    <name type="scientific">Salmonella paratyphi A (strain ATCC 9150 / SARB42)</name>
    <dbReference type="NCBI Taxonomy" id="295319"/>
    <lineage>
        <taxon>Bacteria</taxon>
        <taxon>Pseudomonadati</taxon>
        <taxon>Pseudomonadota</taxon>
        <taxon>Gammaproteobacteria</taxon>
        <taxon>Enterobacterales</taxon>
        <taxon>Enterobacteriaceae</taxon>
        <taxon>Salmonella</taxon>
    </lineage>
</organism>
<accession>Q5PCX7</accession>
<comment type="function">
    <text evidence="1">Catalyzes the final step of fatty acid oxidation in which acetyl-CoA is released and the CoA ester of a fatty acid two carbons shorter is formed.</text>
</comment>
<comment type="catalytic activity">
    <reaction evidence="1">
        <text>an acyl-CoA + acetyl-CoA = a 3-oxoacyl-CoA + CoA</text>
        <dbReference type="Rhea" id="RHEA:21564"/>
        <dbReference type="ChEBI" id="CHEBI:57287"/>
        <dbReference type="ChEBI" id="CHEBI:57288"/>
        <dbReference type="ChEBI" id="CHEBI:58342"/>
        <dbReference type="ChEBI" id="CHEBI:90726"/>
        <dbReference type="EC" id="2.3.1.16"/>
    </reaction>
</comment>
<comment type="pathway">
    <text evidence="1">Lipid metabolism; fatty acid beta-oxidation.</text>
</comment>
<comment type="subunit">
    <text evidence="1">Heterotetramer of two alpha chains (FadJ) and two beta chains (FadI).</text>
</comment>
<comment type="subcellular location">
    <subcellularLocation>
        <location evidence="1">Cytoplasm</location>
    </subcellularLocation>
</comment>
<comment type="similarity">
    <text evidence="1">Belongs to the thiolase-like superfamily. Thiolase family.</text>
</comment>